<reference key="1">
    <citation type="journal article" date="1999" name="Nat. Genet.">
        <title>Comparative genomes of Chlamydia pneumoniae and C. trachomatis.</title>
        <authorList>
            <person name="Kalman S."/>
            <person name="Mitchell W.P."/>
            <person name="Marathe R."/>
            <person name="Lammel C.J."/>
            <person name="Fan J."/>
            <person name="Hyman R.W."/>
            <person name="Olinger L."/>
            <person name="Grimwood J."/>
            <person name="Davis R.W."/>
            <person name="Stephens R.S."/>
        </authorList>
    </citation>
    <scope>NUCLEOTIDE SEQUENCE [LARGE SCALE GENOMIC DNA]</scope>
    <source>
        <strain>CWL029</strain>
    </source>
</reference>
<reference key="2">
    <citation type="journal article" date="2000" name="Nucleic Acids Res.">
        <title>Genome sequences of Chlamydia trachomatis MoPn and Chlamydia pneumoniae AR39.</title>
        <authorList>
            <person name="Read T.D."/>
            <person name="Brunham R.C."/>
            <person name="Shen C."/>
            <person name="Gill S.R."/>
            <person name="Heidelberg J.F."/>
            <person name="White O."/>
            <person name="Hickey E.K."/>
            <person name="Peterson J.D."/>
            <person name="Utterback T.R."/>
            <person name="Berry K.J."/>
            <person name="Bass S."/>
            <person name="Linher K.D."/>
            <person name="Weidman J.F."/>
            <person name="Khouri H.M."/>
            <person name="Craven B."/>
            <person name="Bowman C."/>
            <person name="Dodson R.J."/>
            <person name="Gwinn M.L."/>
            <person name="Nelson W.C."/>
            <person name="DeBoy R.T."/>
            <person name="Kolonay J.F."/>
            <person name="McClarty G."/>
            <person name="Salzberg S.L."/>
            <person name="Eisen J.A."/>
            <person name="Fraser C.M."/>
        </authorList>
    </citation>
    <scope>NUCLEOTIDE SEQUENCE [LARGE SCALE GENOMIC DNA]</scope>
    <source>
        <strain>AR39</strain>
    </source>
</reference>
<reference key="3">
    <citation type="journal article" date="2000" name="Nucleic Acids Res.">
        <title>Comparison of whole genome sequences of Chlamydia pneumoniae J138 from Japan and CWL029 from USA.</title>
        <authorList>
            <person name="Shirai M."/>
            <person name="Hirakawa H."/>
            <person name="Kimoto M."/>
            <person name="Tabuchi M."/>
            <person name="Kishi F."/>
            <person name="Ouchi K."/>
            <person name="Shiba T."/>
            <person name="Ishii K."/>
            <person name="Hattori M."/>
            <person name="Kuhara S."/>
            <person name="Nakazawa T."/>
        </authorList>
    </citation>
    <scope>NUCLEOTIDE SEQUENCE [LARGE SCALE GENOMIC DNA]</scope>
    <source>
        <strain>J138</strain>
    </source>
</reference>
<reference key="4">
    <citation type="submission" date="2002-05" db="EMBL/GenBank/DDBJ databases">
        <title>The genome sequence of Chlamydia pneumoniae TW183 and comparison with other Chlamydia strains based on whole genome sequence analysis.</title>
        <authorList>
            <person name="Geng M.M."/>
            <person name="Schuhmacher A."/>
            <person name="Muehldorfer I."/>
            <person name="Bensch K.W."/>
            <person name="Schaefer K.P."/>
            <person name="Schneider S."/>
            <person name="Pohl T."/>
            <person name="Essig A."/>
            <person name="Marre R."/>
            <person name="Melchers K."/>
        </authorList>
    </citation>
    <scope>NUCLEOTIDE SEQUENCE [LARGE SCALE GENOMIC DNA]</scope>
    <source>
        <strain>TW-183</strain>
    </source>
</reference>
<name>DNLJ_CHLPN</name>
<gene>
    <name evidence="1" type="primary">ligA</name>
    <name type="ordered locus">CPn_0149</name>
    <name type="ordered locus">CP_0624</name>
    <name type="ordered locus">CpB0150</name>
</gene>
<protein>
    <recommendedName>
        <fullName evidence="1">DNA ligase</fullName>
        <ecNumber evidence="1">6.5.1.2</ecNumber>
    </recommendedName>
    <alternativeName>
        <fullName evidence="1">Polydeoxyribonucleotide synthase [NAD(+)]</fullName>
    </alternativeName>
</protein>
<dbReference type="EC" id="6.5.1.2" evidence="1"/>
<dbReference type="EMBL" id="AE001363">
    <property type="protein sequence ID" value="AAD18302.1"/>
    <property type="molecule type" value="Genomic_DNA"/>
</dbReference>
<dbReference type="EMBL" id="AE002161">
    <property type="protein sequence ID" value="AAF38439.1"/>
    <property type="molecule type" value="Genomic_DNA"/>
</dbReference>
<dbReference type="EMBL" id="BA000008">
    <property type="protein sequence ID" value="BAA98359.1"/>
    <property type="molecule type" value="Genomic_DNA"/>
</dbReference>
<dbReference type="EMBL" id="AE009440">
    <property type="protein sequence ID" value="AAP98083.1"/>
    <property type="molecule type" value="Genomic_DNA"/>
</dbReference>
<dbReference type="PIR" id="B72114">
    <property type="entry name" value="B72114"/>
</dbReference>
<dbReference type="PIR" id="E86509">
    <property type="entry name" value="E86509"/>
</dbReference>
<dbReference type="RefSeq" id="NP_224357.1">
    <property type="nucleotide sequence ID" value="NC_000922.1"/>
</dbReference>
<dbReference type="RefSeq" id="WP_010882799.1">
    <property type="nucleotide sequence ID" value="NZ_LN847257.1"/>
</dbReference>
<dbReference type="SMR" id="Q9Z934"/>
<dbReference type="STRING" id="406984.CPK_ORF00663"/>
<dbReference type="GeneID" id="45050194"/>
<dbReference type="KEGG" id="cpa:CP_0624"/>
<dbReference type="KEGG" id="cpj:dnlJ"/>
<dbReference type="KEGG" id="cpn:CPn_0149"/>
<dbReference type="KEGG" id="cpt:CpB0150"/>
<dbReference type="PATRIC" id="fig|115713.3.peg.169"/>
<dbReference type="eggNOG" id="COG0272">
    <property type="taxonomic scope" value="Bacteria"/>
</dbReference>
<dbReference type="HOGENOM" id="CLU_007764_2_1_0"/>
<dbReference type="OrthoDB" id="9759736at2"/>
<dbReference type="Proteomes" id="UP000000583">
    <property type="component" value="Chromosome"/>
</dbReference>
<dbReference type="Proteomes" id="UP000000801">
    <property type="component" value="Chromosome"/>
</dbReference>
<dbReference type="GO" id="GO:0005829">
    <property type="term" value="C:cytosol"/>
    <property type="evidence" value="ECO:0007669"/>
    <property type="project" value="TreeGrafter"/>
</dbReference>
<dbReference type="GO" id="GO:0003677">
    <property type="term" value="F:DNA binding"/>
    <property type="evidence" value="ECO:0007669"/>
    <property type="project" value="InterPro"/>
</dbReference>
<dbReference type="GO" id="GO:0003911">
    <property type="term" value="F:DNA ligase (NAD+) activity"/>
    <property type="evidence" value="ECO:0007669"/>
    <property type="project" value="UniProtKB-UniRule"/>
</dbReference>
<dbReference type="GO" id="GO:0046872">
    <property type="term" value="F:metal ion binding"/>
    <property type="evidence" value="ECO:0007669"/>
    <property type="project" value="UniProtKB-KW"/>
</dbReference>
<dbReference type="GO" id="GO:0006281">
    <property type="term" value="P:DNA repair"/>
    <property type="evidence" value="ECO:0007669"/>
    <property type="project" value="UniProtKB-KW"/>
</dbReference>
<dbReference type="GO" id="GO:0006260">
    <property type="term" value="P:DNA replication"/>
    <property type="evidence" value="ECO:0007669"/>
    <property type="project" value="UniProtKB-KW"/>
</dbReference>
<dbReference type="CDD" id="cd17748">
    <property type="entry name" value="BRCT_DNA_ligase_like"/>
    <property type="match status" value="1"/>
</dbReference>
<dbReference type="CDD" id="cd00114">
    <property type="entry name" value="LIGANc"/>
    <property type="match status" value="1"/>
</dbReference>
<dbReference type="FunFam" id="2.40.50.140:FF:000012">
    <property type="entry name" value="DNA ligase"/>
    <property type="match status" value="1"/>
</dbReference>
<dbReference type="Gene3D" id="6.20.10.30">
    <property type="match status" value="1"/>
</dbReference>
<dbReference type="Gene3D" id="1.10.150.20">
    <property type="entry name" value="5' to 3' exonuclease, C-terminal subdomain"/>
    <property type="match status" value="2"/>
</dbReference>
<dbReference type="Gene3D" id="3.40.50.10190">
    <property type="entry name" value="BRCT domain"/>
    <property type="match status" value="1"/>
</dbReference>
<dbReference type="Gene3D" id="3.30.470.30">
    <property type="entry name" value="DNA ligase/mRNA capping enzyme"/>
    <property type="match status" value="1"/>
</dbReference>
<dbReference type="Gene3D" id="1.10.287.610">
    <property type="entry name" value="Helix hairpin bin"/>
    <property type="match status" value="1"/>
</dbReference>
<dbReference type="Gene3D" id="2.40.50.140">
    <property type="entry name" value="Nucleic acid-binding proteins"/>
    <property type="match status" value="1"/>
</dbReference>
<dbReference type="HAMAP" id="MF_01588">
    <property type="entry name" value="DNA_ligase_A"/>
    <property type="match status" value="1"/>
</dbReference>
<dbReference type="InterPro" id="IPR001357">
    <property type="entry name" value="BRCT_dom"/>
</dbReference>
<dbReference type="InterPro" id="IPR036420">
    <property type="entry name" value="BRCT_dom_sf"/>
</dbReference>
<dbReference type="InterPro" id="IPR041663">
    <property type="entry name" value="DisA/LigA_HHH"/>
</dbReference>
<dbReference type="InterPro" id="IPR001679">
    <property type="entry name" value="DNA_ligase"/>
</dbReference>
<dbReference type="InterPro" id="IPR018239">
    <property type="entry name" value="DNA_ligase_AS"/>
</dbReference>
<dbReference type="InterPro" id="IPR033136">
    <property type="entry name" value="DNA_ligase_CS"/>
</dbReference>
<dbReference type="InterPro" id="IPR013839">
    <property type="entry name" value="DNAligase_adenylation"/>
</dbReference>
<dbReference type="InterPro" id="IPR013840">
    <property type="entry name" value="DNAligase_N"/>
</dbReference>
<dbReference type="InterPro" id="IPR003583">
    <property type="entry name" value="Hlx-hairpin-Hlx_DNA-bd_motif"/>
</dbReference>
<dbReference type="InterPro" id="IPR012340">
    <property type="entry name" value="NA-bd_OB-fold"/>
</dbReference>
<dbReference type="InterPro" id="IPR004150">
    <property type="entry name" value="NAD_DNA_ligase_OB"/>
</dbReference>
<dbReference type="InterPro" id="IPR010994">
    <property type="entry name" value="RuvA_2-like"/>
</dbReference>
<dbReference type="InterPro" id="IPR004149">
    <property type="entry name" value="Znf_DNAligase_C4"/>
</dbReference>
<dbReference type="NCBIfam" id="TIGR00575">
    <property type="entry name" value="dnlj"/>
    <property type="match status" value="1"/>
</dbReference>
<dbReference type="NCBIfam" id="NF005932">
    <property type="entry name" value="PRK07956.1"/>
    <property type="match status" value="1"/>
</dbReference>
<dbReference type="PANTHER" id="PTHR23389">
    <property type="entry name" value="CHROMOSOME TRANSMISSION FIDELITY FACTOR 18"/>
    <property type="match status" value="1"/>
</dbReference>
<dbReference type="PANTHER" id="PTHR23389:SF9">
    <property type="entry name" value="DNA LIGASE"/>
    <property type="match status" value="1"/>
</dbReference>
<dbReference type="Pfam" id="PF00533">
    <property type="entry name" value="BRCT"/>
    <property type="match status" value="1"/>
</dbReference>
<dbReference type="Pfam" id="PF01653">
    <property type="entry name" value="DNA_ligase_aden"/>
    <property type="match status" value="1"/>
</dbReference>
<dbReference type="Pfam" id="PF03120">
    <property type="entry name" value="DNA_ligase_OB"/>
    <property type="match status" value="1"/>
</dbReference>
<dbReference type="Pfam" id="PF03119">
    <property type="entry name" value="DNA_ligase_ZBD"/>
    <property type="match status" value="1"/>
</dbReference>
<dbReference type="Pfam" id="PF12826">
    <property type="entry name" value="HHH_2"/>
    <property type="match status" value="1"/>
</dbReference>
<dbReference type="Pfam" id="PF14520">
    <property type="entry name" value="HHH_5"/>
    <property type="match status" value="1"/>
</dbReference>
<dbReference type="PIRSF" id="PIRSF001604">
    <property type="entry name" value="LigA"/>
    <property type="match status" value="1"/>
</dbReference>
<dbReference type="SMART" id="SM00292">
    <property type="entry name" value="BRCT"/>
    <property type="match status" value="1"/>
</dbReference>
<dbReference type="SMART" id="SM00278">
    <property type="entry name" value="HhH1"/>
    <property type="match status" value="2"/>
</dbReference>
<dbReference type="SMART" id="SM00532">
    <property type="entry name" value="LIGANc"/>
    <property type="match status" value="1"/>
</dbReference>
<dbReference type="SUPFAM" id="SSF52113">
    <property type="entry name" value="BRCT domain"/>
    <property type="match status" value="1"/>
</dbReference>
<dbReference type="SUPFAM" id="SSF56091">
    <property type="entry name" value="DNA ligase/mRNA capping enzyme, catalytic domain"/>
    <property type="match status" value="1"/>
</dbReference>
<dbReference type="SUPFAM" id="SSF50249">
    <property type="entry name" value="Nucleic acid-binding proteins"/>
    <property type="match status" value="1"/>
</dbReference>
<dbReference type="SUPFAM" id="SSF47781">
    <property type="entry name" value="RuvA domain 2-like"/>
    <property type="match status" value="1"/>
</dbReference>
<dbReference type="PROSITE" id="PS50172">
    <property type="entry name" value="BRCT"/>
    <property type="match status" value="1"/>
</dbReference>
<dbReference type="PROSITE" id="PS01055">
    <property type="entry name" value="DNA_LIGASE_N1"/>
    <property type="match status" value="1"/>
</dbReference>
<dbReference type="PROSITE" id="PS01056">
    <property type="entry name" value="DNA_LIGASE_N2"/>
    <property type="match status" value="1"/>
</dbReference>
<keyword id="KW-0227">DNA damage</keyword>
<keyword id="KW-0234">DNA repair</keyword>
<keyword id="KW-0235">DNA replication</keyword>
<keyword id="KW-0436">Ligase</keyword>
<keyword id="KW-0460">Magnesium</keyword>
<keyword id="KW-0464">Manganese</keyword>
<keyword id="KW-0479">Metal-binding</keyword>
<keyword id="KW-0520">NAD</keyword>
<keyword id="KW-0862">Zinc</keyword>
<evidence type="ECO:0000255" key="1">
    <source>
        <dbReference type="HAMAP-Rule" id="MF_01588"/>
    </source>
</evidence>
<organism>
    <name type="scientific">Chlamydia pneumoniae</name>
    <name type="common">Chlamydophila pneumoniae</name>
    <dbReference type="NCBI Taxonomy" id="83558"/>
    <lineage>
        <taxon>Bacteria</taxon>
        <taxon>Pseudomonadati</taxon>
        <taxon>Chlamydiota</taxon>
        <taxon>Chlamydiia</taxon>
        <taxon>Chlamydiales</taxon>
        <taxon>Chlamydiaceae</taxon>
        <taxon>Chlamydia/Chlamydophila group</taxon>
        <taxon>Chlamydia</taxon>
    </lineage>
</organism>
<feature type="chain" id="PRO_0000161743" description="DNA ligase">
    <location>
        <begin position="1"/>
        <end position="662"/>
    </location>
</feature>
<feature type="domain" description="BRCT" evidence="1">
    <location>
        <begin position="583"/>
        <end position="662"/>
    </location>
</feature>
<feature type="active site" description="N6-AMP-lysine intermediate" evidence="1">
    <location>
        <position position="115"/>
    </location>
</feature>
<feature type="binding site" evidence="1">
    <location>
        <begin position="34"/>
        <end position="38"/>
    </location>
    <ligand>
        <name>NAD(+)</name>
        <dbReference type="ChEBI" id="CHEBI:57540"/>
    </ligand>
</feature>
<feature type="binding site" evidence="1">
    <location>
        <begin position="83"/>
        <end position="84"/>
    </location>
    <ligand>
        <name>NAD(+)</name>
        <dbReference type="ChEBI" id="CHEBI:57540"/>
    </ligand>
</feature>
<feature type="binding site" evidence="1">
    <location>
        <position position="113"/>
    </location>
    <ligand>
        <name>NAD(+)</name>
        <dbReference type="ChEBI" id="CHEBI:57540"/>
    </ligand>
</feature>
<feature type="binding site" evidence="1">
    <location>
        <position position="136"/>
    </location>
    <ligand>
        <name>NAD(+)</name>
        <dbReference type="ChEBI" id="CHEBI:57540"/>
    </ligand>
</feature>
<feature type="binding site" evidence="1">
    <location>
        <position position="172"/>
    </location>
    <ligand>
        <name>NAD(+)</name>
        <dbReference type="ChEBI" id="CHEBI:57540"/>
    </ligand>
</feature>
<feature type="binding site" evidence="1">
    <location>
        <position position="286"/>
    </location>
    <ligand>
        <name>NAD(+)</name>
        <dbReference type="ChEBI" id="CHEBI:57540"/>
    </ligand>
</feature>
<feature type="binding site" evidence="1">
    <location>
        <position position="310"/>
    </location>
    <ligand>
        <name>NAD(+)</name>
        <dbReference type="ChEBI" id="CHEBI:57540"/>
    </ligand>
</feature>
<feature type="binding site" evidence="1">
    <location>
        <position position="404"/>
    </location>
    <ligand>
        <name>Zn(2+)</name>
        <dbReference type="ChEBI" id="CHEBI:29105"/>
    </ligand>
</feature>
<feature type="binding site" evidence="1">
    <location>
        <position position="407"/>
    </location>
    <ligand>
        <name>Zn(2+)</name>
        <dbReference type="ChEBI" id="CHEBI:29105"/>
    </ligand>
</feature>
<feature type="binding site" evidence="1">
    <location>
        <position position="422"/>
    </location>
    <ligand>
        <name>Zn(2+)</name>
        <dbReference type="ChEBI" id="CHEBI:29105"/>
    </ligand>
</feature>
<feature type="binding site" evidence="1">
    <location>
        <position position="427"/>
    </location>
    <ligand>
        <name>Zn(2+)</name>
        <dbReference type="ChEBI" id="CHEBI:29105"/>
    </ligand>
</feature>
<proteinExistence type="inferred from homology"/>
<accession>Q9Z934</accession>
<accession>Q9JQ74</accession>
<comment type="function">
    <text evidence="1">DNA ligase that catalyzes the formation of phosphodiester linkages between 5'-phosphoryl and 3'-hydroxyl groups in double-stranded DNA using NAD as a coenzyme and as the energy source for the reaction. It is essential for DNA replication and repair of damaged DNA.</text>
</comment>
<comment type="catalytic activity">
    <reaction evidence="1">
        <text>NAD(+) + (deoxyribonucleotide)n-3'-hydroxyl + 5'-phospho-(deoxyribonucleotide)m = (deoxyribonucleotide)n+m + AMP + beta-nicotinamide D-nucleotide.</text>
        <dbReference type="EC" id="6.5.1.2"/>
    </reaction>
</comment>
<comment type="cofactor">
    <cofactor evidence="1">
        <name>Mg(2+)</name>
        <dbReference type="ChEBI" id="CHEBI:18420"/>
    </cofactor>
    <cofactor evidence="1">
        <name>Mn(2+)</name>
        <dbReference type="ChEBI" id="CHEBI:29035"/>
    </cofactor>
</comment>
<comment type="similarity">
    <text evidence="1">Belongs to the NAD-dependent DNA ligase family. LigA subfamily.</text>
</comment>
<sequence>MKEENSQAHYLALCRELEDHDYSYYVLHRPRISDYEYDMKLRKLLEIERSHPEWKVLWSPSTRLGDRPSGTFSVVSHKEPMLSIANSYSKEELSEFFSRVEKSLGTSPRYTVELKIDGIAVAIRYEDRVLVQALSRGNGKQGEDITSNIRTIRSLPLRLPEDAPEFIEVRGEVFFSYSTFQIINEKQQQLEKTIFANPRNAAGGTLKLLSPQEVAKRKLEISIYNLIAPGDNDSHYENLQRCLEWGFPVSGKPRLCSTPEEVISVLKTIETERASLPMEIDGAVIKVDSLASQRVLGATGKHYRWALAYKYAPEEAETLLEDILVQVGRTGVLTPVAKLTPVLLSGSLVSRASLYNEDEIHRKDIRIGDTVCVAKGGEVIPKVVRVCREKRPEGSEVWNMPEFCPVCHSHVVREEDRVSVRCVNPECVAGAIEKIRFFVGRGALNIDHLGVKVITKLFELGLVHTCADLFQLTTEDLMQIPGIRERSARNILESIEQAKHVDLDRFLVALGIPLIGIGVATVLAGHFETLDRVISATFEELLSLEGIGEKVAHAIAEYFSDSTHLNEIKKMQDLGVCISPYHKSGSTCFGKAFVITGTLEGMSRLDAETAIRNCGGKVGSSVSKQTDYVVMGNNPGSKLEKARKLGVSILDQEAFTNLIHLE</sequence>